<comment type="function">
    <text evidence="4">Does not seem to be essential for lipid utilization and gluconeogenesis in seedlings.</text>
</comment>
<comment type="catalytic activity">
    <reaction evidence="2">
        <text>glyoxylate + acetyl-CoA + H2O = (S)-malate + CoA + H(+)</text>
        <dbReference type="Rhea" id="RHEA:18181"/>
        <dbReference type="ChEBI" id="CHEBI:15377"/>
        <dbReference type="ChEBI" id="CHEBI:15378"/>
        <dbReference type="ChEBI" id="CHEBI:15589"/>
        <dbReference type="ChEBI" id="CHEBI:36655"/>
        <dbReference type="ChEBI" id="CHEBI:57287"/>
        <dbReference type="ChEBI" id="CHEBI:57288"/>
        <dbReference type="EC" id="2.3.3.9"/>
    </reaction>
</comment>
<comment type="pathway">
    <text evidence="1">Carbohydrate metabolism; glyoxylate cycle; (S)-malate from isocitrate: step 2/2.</text>
</comment>
<comment type="subcellular location">
    <subcellularLocation>
        <location evidence="5">Glyoxysome</location>
    </subcellularLocation>
</comment>
<comment type="developmental stage">
    <text evidence="3">Expressed from 1 to 5 days after seed imbibition (at protein level).</text>
</comment>
<comment type="disruption phenotype">
    <text evidence="2">No visible phenotype under normal growth conditions, but the frequency of mutant seedlings to establish into plantlets with true leaves is decreased under short day conditions.</text>
</comment>
<comment type="similarity">
    <text evidence="5">Belongs to the malate synthase family.</text>
</comment>
<protein>
    <recommendedName>
        <fullName evidence="4">Malate synthase</fullName>
        <ecNumber evidence="2">2.3.3.9</ecNumber>
    </recommendedName>
</protein>
<sequence>MELETSVYRPNVAVYDSPDGVEVRGRYDQIFAKILTREALSFVAELQREFRGHVKYAMECRREARRRYNSGAVPGFDPSTKFIRDGDWSCASVPPAVADRRVEITGPVERKMIINALNSGAKVFMADFEDALSPSWENLMRGHVNLKDAVDGSITFHDKSRNRVYKLNDQTAKLFVRPRGWHLPEAHILIDGEPATGCLVDFGLYFFHNYAKFRQTQGSGFGPFFYLPKMEHSREAKIWNSVFERAEKMAGIERGSIRATVLIETLPAVFQMNEILYELRDHSVGLNCGRWDYIFSYVKTFQAHPDRLLPDRVLVGMGQHFMRSYSDLLIRTCHKRGVHAMGGMAAQIPIRDDPKANEMALDLVRKDKLREVRAGHDGTWAAHPGLIPICMEAFTGHMGKSPNQIKSVKREDAAAITEEDLLQIPRGVRTLEGLRLNTRVGIQYLAAWLTGSGSVPLYNLMEDAATAEISRVQNWQWIRYGVELDGDGLGVRVSKELFGRVVEEEMERIEKEVGKDKFKNGMYKEACKMFTKQCTAPELDDFLTLAVYNHIVAHYPINVSRL</sequence>
<dbReference type="EC" id="2.3.3.9" evidence="2"/>
<dbReference type="EMBL" id="AB005235">
    <property type="protein sequence ID" value="BAB08612.1"/>
    <property type="molecule type" value="Genomic_DNA"/>
</dbReference>
<dbReference type="EMBL" id="AL162873">
    <property type="protein sequence ID" value="CAB85506.1"/>
    <property type="molecule type" value="Genomic_DNA"/>
</dbReference>
<dbReference type="EMBL" id="CP002688">
    <property type="protein sequence ID" value="AED90663.1"/>
    <property type="molecule type" value="Genomic_DNA"/>
</dbReference>
<dbReference type="EMBL" id="CP002688">
    <property type="protein sequence ID" value="AED90664.1"/>
    <property type="molecule type" value="Genomic_DNA"/>
</dbReference>
<dbReference type="EMBL" id="AF360126">
    <property type="protein sequence ID" value="AAK25836.1"/>
    <property type="molecule type" value="mRNA"/>
</dbReference>
<dbReference type="EMBL" id="AY051027">
    <property type="protein sequence ID" value="AAK93704.1"/>
    <property type="molecule type" value="mRNA"/>
</dbReference>
<dbReference type="PIR" id="T48413">
    <property type="entry name" value="T48413"/>
</dbReference>
<dbReference type="RefSeq" id="NP_001190219.1">
    <property type="nucleotide sequence ID" value="NM_001203290.1"/>
</dbReference>
<dbReference type="RefSeq" id="NP_196006.1">
    <property type="nucleotide sequence ID" value="NM_120467.4"/>
</dbReference>
<dbReference type="SMR" id="Q9LZC3"/>
<dbReference type="BioGRID" id="16966">
    <property type="interactions" value="1"/>
</dbReference>
<dbReference type="FunCoup" id="Q9LZC3">
    <property type="interactions" value="345"/>
</dbReference>
<dbReference type="STRING" id="3702.Q9LZC3"/>
<dbReference type="PaxDb" id="3702-AT5G03860.1"/>
<dbReference type="ProteomicsDB" id="238885"/>
<dbReference type="EnsemblPlants" id="AT5G03860.1">
    <property type="protein sequence ID" value="AT5G03860.1"/>
    <property type="gene ID" value="AT5G03860"/>
</dbReference>
<dbReference type="EnsemblPlants" id="AT5G03860.2">
    <property type="protein sequence ID" value="AT5G03860.2"/>
    <property type="gene ID" value="AT5G03860"/>
</dbReference>
<dbReference type="GeneID" id="831690"/>
<dbReference type="Gramene" id="AT5G03860.1">
    <property type="protein sequence ID" value="AT5G03860.1"/>
    <property type="gene ID" value="AT5G03860"/>
</dbReference>
<dbReference type="Gramene" id="AT5G03860.2">
    <property type="protein sequence ID" value="AT5G03860.2"/>
    <property type="gene ID" value="AT5G03860"/>
</dbReference>
<dbReference type="KEGG" id="ath:AT5G03860"/>
<dbReference type="Araport" id="AT5G03860"/>
<dbReference type="TAIR" id="AT5G03860">
    <property type="gene designation" value="MLS"/>
</dbReference>
<dbReference type="eggNOG" id="KOG1261">
    <property type="taxonomic scope" value="Eukaryota"/>
</dbReference>
<dbReference type="HOGENOM" id="CLU_018928_3_0_1"/>
<dbReference type="InParanoid" id="Q9LZC3"/>
<dbReference type="OMA" id="WHLPERH"/>
<dbReference type="OrthoDB" id="4078635at2759"/>
<dbReference type="PhylomeDB" id="Q9LZC3"/>
<dbReference type="BioCyc" id="ARA:AT5G03860-MONOMER"/>
<dbReference type="BioCyc" id="MetaCyc:AT5G03860-MONOMER"/>
<dbReference type="UniPathway" id="UPA00703">
    <property type="reaction ID" value="UER00720"/>
</dbReference>
<dbReference type="PRO" id="PR:Q9LZC3"/>
<dbReference type="Proteomes" id="UP000006548">
    <property type="component" value="Chromosome 5"/>
</dbReference>
<dbReference type="ExpressionAtlas" id="Q9LZC3">
    <property type="expression patterns" value="baseline and differential"/>
</dbReference>
<dbReference type="GO" id="GO:0009514">
    <property type="term" value="C:glyoxysome"/>
    <property type="evidence" value="ECO:0007669"/>
    <property type="project" value="UniProtKB-SubCell"/>
</dbReference>
<dbReference type="GO" id="GO:0004474">
    <property type="term" value="F:malate synthase activity"/>
    <property type="evidence" value="ECO:0000315"/>
    <property type="project" value="TAIR"/>
</dbReference>
<dbReference type="GO" id="GO:0006097">
    <property type="term" value="P:glyoxylate cycle"/>
    <property type="evidence" value="ECO:0007669"/>
    <property type="project" value="UniProtKB-UniPathway"/>
</dbReference>
<dbReference type="GO" id="GO:0006099">
    <property type="term" value="P:tricarboxylic acid cycle"/>
    <property type="evidence" value="ECO:0007669"/>
    <property type="project" value="UniProtKB-KW"/>
</dbReference>
<dbReference type="CDD" id="cd00727">
    <property type="entry name" value="malate_synt_A"/>
    <property type="match status" value="1"/>
</dbReference>
<dbReference type="FunFam" id="1.20.1220.12:FF:000001">
    <property type="entry name" value="Malate synthase"/>
    <property type="match status" value="1"/>
</dbReference>
<dbReference type="FunFam" id="3.20.20.360:FF:000001">
    <property type="entry name" value="Malate synthase"/>
    <property type="match status" value="1"/>
</dbReference>
<dbReference type="Gene3D" id="3.20.20.360">
    <property type="entry name" value="Malate synthase, domain 3"/>
    <property type="match status" value="1"/>
</dbReference>
<dbReference type="Gene3D" id="1.20.1220.12">
    <property type="entry name" value="Malate synthase, domain III"/>
    <property type="match status" value="1"/>
</dbReference>
<dbReference type="InterPro" id="IPR044856">
    <property type="entry name" value="Malate_synth_C_sf"/>
</dbReference>
<dbReference type="InterPro" id="IPR011076">
    <property type="entry name" value="Malate_synth_sf"/>
</dbReference>
<dbReference type="InterPro" id="IPR006252">
    <property type="entry name" value="Malate_synthA"/>
</dbReference>
<dbReference type="InterPro" id="IPR019830">
    <property type="entry name" value="Malate_synthase_CS"/>
</dbReference>
<dbReference type="InterPro" id="IPR001465">
    <property type="entry name" value="Malate_synthase_TIM"/>
</dbReference>
<dbReference type="InterPro" id="IPR048355">
    <property type="entry name" value="MS_C"/>
</dbReference>
<dbReference type="InterPro" id="IPR048356">
    <property type="entry name" value="MS_N"/>
</dbReference>
<dbReference type="InterPro" id="IPR046363">
    <property type="entry name" value="MS_N_TIM-barrel_dom"/>
</dbReference>
<dbReference type="NCBIfam" id="TIGR01344">
    <property type="entry name" value="malate_syn_A"/>
    <property type="match status" value="1"/>
</dbReference>
<dbReference type="PANTHER" id="PTHR42902">
    <property type="entry name" value="MALATE SYNTHASE"/>
    <property type="match status" value="1"/>
</dbReference>
<dbReference type="PANTHER" id="PTHR42902:SF1">
    <property type="entry name" value="MALATE SYNTHASE 1-RELATED"/>
    <property type="match status" value="1"/>
</dbReference>
<dbReference type="Pfam" id="PF20659">
    <property type="entry name" value="MS_C"/>
    <property type="match status" value="1"/>
</dbReference>
<dbReference type="Pfam" id="PF20656">
    <property type="entry name" value="MS_N"/>
    <property type="match status" value="1"/>
</dbReference>
<dbReference type="Pfam" id="PF01274">
    <property type="entry name" value="MS_TIM-barrel"/>
    <property type="match status" value="1"/>
</dbReference>
<dbReference type="PIRSF" id="PIRSF001363">
    <property type="entry name" value="Malate_synth"/>
    <property type="match status" value="1"/>
</dbReference>
<dbReference type="SUPFAM" id="SSF51645">
    <property type="entry name" value="Malate synthase G"/>
    <property type="match status" value="1"/>
</dbReference>
<dbReference type="PROSITE" id="PS00510">
    <property type="entry name" value="MALATE_SYNTHASE"/>
    <property type="match status" value="1"/>
</dbReference>
<reference key="1">
    <citation type="journal article" date="1997" name="DNA Res.">
        <title>Structural analysis of Arabidopsis thaliana chromosome 5. I. Sequence features of the 1.6 Mb regions covered by twenty physically assigned P1 clones.</title>
        <authorList>
            <person name="Sato S."/>
            <person name="Kotani H."/>
            <person name="Nakamura Y."/>
            <person name="Kaneko T."/>
            <person name="Asamizu E."/>
            <person name="Fukami M."/>
            <person name="Miyajima N."/>
            <person name="Tabata S."/>
        </authorList>
    </citation>
    <scope>NUCLEOTIDE SEQUENCE [LARGE SCALE GENOMIC DNA]</scope>
    <source>
        <strain>cv. Columbia</strain>
    </source>
</reference>
<reference key="2">
    <citation type="journal article" date="2000" name="Nature">
        <title>Sequence and analysis of chromosome 5 of the plant Arabidopsis thaliana.</title>
        <authorList>
            <person name="Tabata S."/>
            <person name="Kaneko T."/>
            <person name="Nakamura Y."/>
            <person name="Kotani H."/>
            <person name="Kato T."/>
            <person name="Asamizu E."/>
            <person name="Miyajima N."/>
            <person name="Sasamoto S."/>
            <person name="Kimura T."/>
            <person name="Hosouchi T."/>
            <person name="Kawashima K."/>
            <person name="Kohara M."/>
            <person name="Matsumoto M."/>
            <person name="Matsuno A."/>
            <person name="Muraki A."/>
            <person name="Nakayama S."/>
            <person name="Nakazaki N."/>
            <person name="Naruo K."/>
            <person name="Okumura S."/>
            <person name="Shinpo S."/>
            <person name="Takeuchi C."/>
            <person name="Wada T."/>
            <person name="Watanabe A."/>
            <person name="Yamada M."/>
            <person name="Yasuda M."/>
            <person name="Sato S."/>
            <person name="de la Bastide M."/>
            <person name="Huang E."/>
            <person name="Spiegel L."/>
            <person name="Gnoj L."/>
            <person name="O'Shaughnessy A."/>
            <person name="Preston R."/>
            <person name="Habermann K."/>
            <person name="Murray J."/>
            <person name="Johnson D."/>
            <person name="Rohlfing T."/>
            <person name="Nelson J."/>
            <person name="Stoneking T."/>
            <person name="Pepin K."/>
            <person name="Spieth J."/>
            <person name="Sekhon M."/>
            <person name="Armstrong J."/>
            <person name="Becker M."/>
            <person name="Belter E."/>
            <person name="Cordum H."/>
            <person name="Cordes M."/>
            <person name="Courtney L."/>
            <person name="Courtney W."/>
            <person name="Dante M."/>
            <person name="Du H."/>
            <person name="Edwards J."/>
            <person name="Fryman J."/>
            <person name="Haakensen B."/>
            <person name="Lamar E."/>
            <person name="Latreille P."/>
            <person name="Leonard S."/>
            <person name="Meyer R."/>
            <person name="Mulvaney E."/>
            <person name="Ozersky P."/>
            <person name="Riley A."/>
            <person name="Strowmatt C."/>
            <person name="Wagner-McPherson C."/>
            <person name="Wollam A."/>
            <person name="Yoakum M."/>
            <person name="Bell M."/>
            <person name="Dedhia N."/>
            <person name="Parnell L."/>
            <person name="Shah R."/>
            <person name="Rodriguez M."/>
            <person name="Hoon See L."/>
            <person name="Vil D."/>
            <person name="Baker J."/>
            <person name="Kirchoff K."/>
            <person name="Toth K."/>
            <person name="King L."/>
            <person name="Bahret A."/>
            <person name="Miller B."/>
            <person name="Marra M.A."/>
            <person name="Martienssen R."/>
            <person name="McCombie W.R."/>
            <person name="Wilson R.K."/>
            <person name="Murphy G."/>
            <person name="Bancroft I."/>
            <person name="Volckaert G."/>
            <person name="Wambutt R."/>
            <person name="Duesterhoeft A."/>
            <person name="Stiekema W."/>
            <person name="Pohl T."/>
            <person name="Entian K.-D."/>
            <person name="Terryn N."/>
            <person name="Hartley N."/>
            <person name="Bent E."/>
            <person name="Johnson S."/>
            <person name="Langham S.-A."/>
            <person name="McCullagh B."/>
            <person name="Robben J."/>
            <person name="Grymonprez B."/>
            <person name="Zimmermann W."/>
            <person name="Ramsperger U."/>
            <person name="Wedler H."/>
            <person name="Balke K."/>
            <person name="Wedler E."/>
            <person name="Peters S."/>
            <person name="van Staveren M."/>
            <person name="Dirkse W."/>
            <person name="Mooijman P."/>
            <person name="Klein Lankhorst R."/>
            <person name="Weitzenegger T."/>
            <person name="Bothe G."/>
            <person name="Rose M."/>
            <person name="Hauf J."/>
            <person name="Berneiser S."/>
            <person name="Hempel S."/>
            <person name="Feldpausch M."/>
            <person name="Lamberth S."/>
            <person name="Villarroel R."/>
            <person name="Gielen J."/>
            <person name="Ardiles W."/>
            <person name="Bents O."/>
            <person name="Lemcke K."/>
            <person name="Kolesov G."/>
            <person name="Mayer K.F.X."/>
            <person name="Rudd S."/>
            <person name="Schoof H."/>
            <person name="Schueller C."/>
            <person name="Zaccaria P."/>
            <person name="Mewes H.-W."/>
            <person name="Bevan M."/>
            <person name="Fransz P.F."/>
        </authorList>
    </citation>
    <scope>NUCLEOTIDE SEQUENCE [LARGE SCALE GENOMIC DNA]</scope>
    <source>
        <strain>cv. Columbia</strain>
    </source>
</reference>
<reference key="3">
    <citation type="journal article" date="2017" name="Plant J.">
        <title>Araport11: a complete reannotation of the Arabidopsis thaliana reference genome.</title>
        <authorList>
            <person name="Cheng C.Y."/>
            <person name="Krishnakumar V."/>
            <person name="Chan A.P."/>
            <person name="Thibaud-Nissen F."/>
            <person name="Schobel S."/>
            <person name="Town C.D."/>
        </authorList>
    </citation>
    <scope>GENOME REANNOTATION</scope>
    <source>
        <strain>cv. Columbia</strain>
    </source>
</reference>
<reference key="4">
    <citation type="journal article" date="2003" name="Science">
        <title>Empirical analysis of transcriptional activity in the Arabidopsis genome.</title>
        <authorList>
            <person name="Yamada K."/>
            <person name="Lim J."/>
            <person name="Dale J.M."/>
            <person name="Chen H."/>
            <person name="Shinn P."/>
            <person name="Palm C.J."/>
            <person name="Southwick A.M."/>
            <person name="Wu H.C."/>
            <person name="Kim C.J."/>
            <person name="Nguyen M."/>
            <person name="Pham P.K."/>
            <person name="Cheuk R.F."/>
            <person name="Karlin-Newmann G."/>
            <person name="Liu S.X."/>
            <person name="Lam B."/>
            <person name="Sakano H."/>
            <person name="Wu T."/>
            <person name="Yu G."/>
            <person name="Miranda M."/>
            <person name="Quach H.L."/>
            <person name="Tripp M."/>
            <person name="Chang C.H."/>
            <person name="Lee J.M."/>
            <person name="Toriumi M.J."/>
            <person name="Chan M.M."/>
            <person name="Tang C.C."/>
            <person name="Onodera C.S."/>
            <person name="Deng J.M."/>
            <person name="Akiyama K."/>
            <person name="Ansari Y."/>
            <person name="Arakawa T."/>
            <person name="Banh J."/>
            <person name="Banno F."/>
            <person name="Bowser L."/>
            <person name="Brooks S.Y."/>
            <person name="Carninci P."/>
            <person name="Chao Q."/>
            <person name="Choy N."/>
            <person name="Enju A."/>
            <person name="Goldsmith A.D."/>
            <person name="Gurjal M."/>
            <person name="Hansen N.F."/>
            <person name="Hayashizaki Y."/>
            <person name="Johnson-Hopson C."/>
            <person name="Hsuan V.W."/>
            <person name="Iida K."/>
            <person name="Karnes M."/>
            <person name="Khan S."/>
            <person name="Koesema E."/>
            <person name="Ishida J."/>
            <person name="Jiang P.X."/>
            <person name="Jones T."/>
            <person name="Kawai J."/>
            <person name="Kamiya A."/>
            <person name="Meyers C."/>
            <person name="Nakajima M."/>
            <person name="Narusaka M."/>
            <person name="Seki M."/>
            <person name="Sakurai T."/>
            <person name="Satou M."/>
            <person name="Tamse R."/>
            <person name="Vaysberg M."/>
            <person name="Wallender E.K."/>
            <person name="Wong C."/>
            <person name="Yamamura Y."/>
            <person name="Yuan S."/>
            <person name="Shinozaki K."/>
            <person name="Davis R.W."/>
            <person name="Theologis A."/>
            <person name="Ecker J.R."/>
        </authorList>
    </citation>
    <scope>NUCLEOTIDE SEQUENCE [LARGE SCALE MRNA]</scope>
    <source>
        <strain>cv. Columbia</strain>
    </source>
</reference>
<reference key="5">
    <citation type="journal article" date="2004" name="J. Biol. Chem.">
        <title>Lipid utilization, gluconeogenesis, and seedling growth in Arabidopsis mutants lacking the glyoxylate cycle enzyme malate synthase.</title>
        <authorList>
            <person name="Cornah J.E."/>
            <person name="Germain V."/>
            <person name="Ward J.L."/>
            <person name="Beale M.H."/>
            <person name="Smith S.M."/>
        </authorList>
    </citation>
    <scope>FUNCTION</scope>
    <scope>CATALYTIC ACTIVITY</scope>
    <scope>DISRUPTION PHENOTYPE</scope>
</reference>
<reference key="6">
    <citation type="journal article" date="2009" name="Proc. Natl. Acad. Sci. U.S.A.">
        <title>Peroxisome-associated matrix protein degradation in Arabidopsis.</title>
        <authorList>
            <person name="Lingard M.J."/>
            <person name="Monroe-Augustus M."/>
            <person name="Bartel B."/>
        </authorList>
    </citation>
    <scope>DEVELOPMENTAL STAGE</scope>
</reference>
<proteinExistence type="evidence at protein level"/>
<keyword id="KW-0329">Glyoxylate bypass</keyword>
<keyword id="KW-0330">Glyoxysome</keyword>
<keyword id="KW-0576">Peroxisome</keyword>
<keyword id="KW-1185">Reference proteome</keyword>
<keyword id="KW-0808">Transferase</keyword>
<keyword id="KW-0816">Tricarboxylic acid cycle</keyword>
<name>MASY_ARATH</name>
<evidence type="ECO:0000255" key="1">
    <source>
        <dbReference type="RuleBase" id="RU000555"/>
    </source>
</evidence>
<evidence type="ECO:0000269" key="2">
    <source>
    </source>
</evidence>
<evidence type="ECO:0000269" key="3">
    <source>
    </source>
</evidence>
<evidence type="ECO:0000303" key="4">
    <source>
    </source>
</evidence>
<evidence type="ECO:0000305" key="5"/>
<evidence type="ECO:0000312" key="6">
    <source>
        <dbReference type="Araport" id="AT5G03860"/>
    </source>
</evidence>
<evidence type="ECO:0000312" key="7">
    <source>
        <dbReference type="EMBL" id="CAB85506.1"/>
    </source>
</evidence>
<accession>Q9LZC3</accession>
<gene>
    <name evidence="4" type="primary">MLS</name>
    <name evidence="6" type="ordered locus">At5g03860</name>
    <name evidence="7" type="ORF">F8F6.70</name>
</gene>
<feature type="chain" id="PRO_0000430876" description="Malate synthase">
    <location>
        <begin position="1"/>
        <end position="562"/>
    </location>
</feature>
<feature type="short sequence motif" description="Microbody targeting signal" evidence="5">
    <location>
        <begin position="560"/>
        <end position="562"/>
    </location>
</feature>
<feature type="active site" description="Proton acceptor" evidence="5">
    <location>
        <position position="177"/>
    </location>
</feature>
<feature type="active site" description="Proton donor" evidence="5">
    <location>
        <position position="463"/>
    </location>
</feature>
<organism>
    <name type="scientific">Arabidopsis thaliana</name>
    <name type="common">Mouse-ear cress</name>
    <dbReference type="NCBI Taxonomy" id="3702"/>
    <lineage>
        <taxon>Eukaryota</taxon>
        <taxon>Viridiplantae</taxon>
        <taxon>Streptophyta</taxon>
        <taxon>Embryophyta</taxon>
        <taxon>Tracheophyta</taxon>
        <taxon>Spermatophyta</taxon>
        <taxon>Magnoliopsida</taxon>
        <taxon>eudicotyledons</taxon>
        <taxon>Gunneridae</taxon>
        <taxon>Pentapetalae</taxon>
        <taxon>rosids</taxon>
        <taxon>malvids</taxon>
        <taxon>Brassicales</taxon>
        <taxon>Brassicaceae</taxon>
        <taxon>Camelineae</taxon>
        <taxon>Arabidopsis</taxon>
    </lineage>
</organism>